<keyword id="KW-0963">Cytoplasm</keyword>
<keyword id="KW-0255">Endonuclease</keyword>
<keyword id="KW-0378">Hydrolase</keyword>
<keyword id="KW-0464">Manganese</keyword>
<keyword id="KW-0479">Metal-binding</keyword>
<keyword id="KW-0540">Nuclease</keyword>
<keyword id="KW-1185">Reference proteome</keyword>
<feature type="chain" id="PRO_0000111633" description="Ribonuclease HII">
    <location>
        <begin position="1"/>
        <end position="260"/>
    </location>
</feature>
<feature type="domain" description="RNase H type-2" evidence="2">
    <location>
        <begin position="70"/>
        <end position="260"/>
    </location>
</feature>
<feature type="binding site" evidence="1">
    <location>
        <position position="76"/>
    </location>
    <ligand>
        <name>a divalent metal cation</name>
        <dbReference type="ChEBI" id="CHEBI:60240"/>
    </ligand>
</feature>
<feature type="binding site" evidence="1">
    <location>
        <position position="77"/>
    </location>
    <ligand>
        <name>a divalent metal cation</name>
        <dbReference type="ChEBI" id="CHEBI:60240"/>
    </ligand>
</feature>
<feature type="binding site" evidence="1">
    <location>
        <position position="171"/>
    </location>
    <ligand>
        <name>a divalent metal cation</name>
        <dbReference type="ChEBI" id="CHEBI:60240"/>
    </ligand>
</feature>
<protein>
    <recommendedName>
        <fullName evidence="1">Ribonuclease HII</fullName>
        <shortName evidence="1">RNase HII</shortName>
        <ecNumber evidence="1">3.1.26.4</ecNumber>
    </recommendedName>
</protein>
<reference key="1">
    <citation type="journal article" date="2002" name="Proc. Natl. Acad. Sci. U.S.A.">
        <title>Genome sequence of Streptococcus mutans UA159, a cariogenic dental pathogen.</title>
        <authorList>
            <person name="Ajdic D.J."/>
            <person name="McShan W.M."/>
            <person name="McLaughlin R.E."/>
            <person name="Savic G."/>
            <person name="Chang J."/>
            <person name="Carson M.B."/>
            <person name="Primeaux C."/>
            <person name="Tian R."/>
            <person name="Kenton S."/>
            <person name="Jia H.G."/>
            <person name="Lin S.P."/>
            <person name="Qian Y."/>
            <person name="Li S."/>
            <person name="Zhu H."/>
            <person name="Najar F.Z."/>
            <person name="Lai H."/>
            <person name="White J."/>
            <person name="Roe B.A."/>
            <person name="Ferretti J.J."/>
        </authorList>
    </citation>
    <scope>NUCLEOTIDE SEQUENCE [LARGE SCALE GENOMIC DNA]</scope>
    <source>
        <strain>ATCC 700610 / UA159</strain>
    </source>
</reference>
<sequence length="260" mass="28913">MATIKEIKEQLAAISDLLDPHWTEFEADARSGVQAAVRQRKKIIQADLDEEVRLENMLRYEKDLYLQGYQAIAGIDEVGRGPLAGPVVAACVILPKNCKIRHLNDSKKIPKKKHEEIYKQVVKVALAIGIGRISSEMIDQVNIYEATKMAMLQAIDDLQGLVSRPDYLLIDAMNLGISIPQSSIIKGDAHSLSIAAASIVAKVTRDRMMIGYDEIYPGYGFAQNVGYGTKQHLEGLETLGVTPIHRRTFEPIKSMLKEKN</sequence>
<dbReference type="EC" id="3.1.26.4" evidence="1"/>
<dbReference type="EMBL" id="AE014133">
    <property type="protein sequence ID" value="AAN58695.1"/>
    <property type="molecule type" value="Genomic_DNA"/>
</dbReference>
<dbReference type="RefSeq" id="NP_721389.1">
    <property type="nucleotide sequence ID" value="NC_004350.2"/>
</dbReference>
<dbReference type="RefSeq" id="WP_002262858.1">
    <property type="nucleotide sequence ID" value="NC_004350.2"/>
</dbReference>
<dbReference type="SMR" id="Q8DUE1"/>
<dbReference type="STRING" id="210007.SMU_994"/>
<dbReference type="KEGG" id="smu:SMU_994"/>
<dbReference type="PATRIC" id="fig|210007.7.peg.887"/>
<dbReference type="eggNOG" id="COG0164">
    <property type="taxonomic scope" value="Bacteria"/>
</dbReference>
<dbReference type="HOGENOM" id="CLU_036532_2_1_9"/>
<dbReference type="OrthoDB" id="9803420at2"/>
<dbReference type="PhylomeDB" id="Q8DUE1"/>
<dbReference type="Proteomes" id="UP000002512">
    <property type="component" value="Chromosome"/>
</dbReference>
<dbReference type="GO" id="GO:0005737">
    <property type="term" value="C:cytoplasm"/>
    <property type="evidence" value="ECO:0007669"/>
    <property type="project" value="UniProtKB-SubCell"/>
</dbReference>
<dbReference type="GO" id="GO:0032299">
    <property type="term" value="C:ribonuclease H2 complex"/>
    <property type="evidence" value="ECO:0007669"/>
    <property type="project" value="TreeGrafter"/>
</dbReference>
<dbReference type="GO" id="GO:0030145">
    <property type="term" value="F:manganese ion binding"/>
    <property type="evidence" value="ECO:0007669"/>
    <property type="project" value="UniProtKB-UniRule"/>
</dbReference>
<dbReference type="GO" id="GO:0003723">
    <property type="term" value="F:RNA binding"/>
    <property type="evidence" value="ECO:0007669"/>
    <property type="project" value="InterPro"/>
</dbReference>
<dbReference type="GO" id="GO:0004523">
    <property type="term" value="F:RNA-DNA hybrid ribonuclease activity"/>
    <property type="evidence" value="ECO:0007669"/>
    <property type="project" value="UniProtKB-UniRule"/>
</dbReference>
<dbReference type="GO" id="GO:0043137">
    <property type="term" value="P:DNA replication, removal of RNA primer"/>
    <property type="evidence" value="ECO:0007669"/>
    <property type="project" value="TreeGrafter"/>
</dbReference>
<dbReference type="GO" id="GO:0006298">
    <property type="term" value="P:mismatch repair"/>
    <property type="evidence" value="ECO:0007669"/>
    <property type="project" value="TreeGrafter"/>
</dbReference>
<dbReference type="CDD" id="cd07182">
    <property type="entry name" value="RNase_HII_bacteria_HII_like"/>
    <property type="match status" value="1"/>
</dbReference>
<dbReference type="FunFam" id="3.30.420.10:FF:000006">
    <property type="entry name" value="Ribonuclease HII"/>
    <property type="match status" value="1"/>
</dbReference>
<dbReference type="Gene3D" id="3.30.420.10">
    <property type="entry name" value="Ribonuclease H-like superfamily/Ribonuclease H"/>
    <property type="match status" value="1"/>
</dbReference>
<dbReference type="HAMAP" id="MF_00052_B">
    <property type="entry name" value="RNase_HII_B"/>
    <property type="match status" value="1"/>
</dbReference>
<dbReference type="InterPro" id="IPR022898">
    <property type="entry name" value="RNase_HII"/>
</dbReference>
<dbReference type="InterPro" id="IPR001352">
    <property type="entry name" value="RNase_HII/HIII"/>
</dbReference>
<dbReference type="InterPro" id="IPR024567">
    <property type="entry name" value="RNase_HII/HIII_dom"/>
</dbReference>
<dbReference type="InterPro" id="IPR012337">
    <property type="entry name" value="RNaseH-like_sf"/>
</dbReference>
<dbReference type="InterPro" id="IPR036397">
    <property type="entry name" value="RNaseH_sf"/>
</dbReference>
<dbReference type="NCBIfam" id="NF000594">
    <property type="entry name" value="PRK00015.1-1"/>
    <property type="match status" value="1"/>
</dbReference>
<dbReference type="NCBIfam" id="NF000595">
    <property type="entry name" value="PRK00015.1-3"/>
    <property type="match status" value="1"/>
</dbReference>
<dbReference type="PANTHER" id="PTHR10954">
    <property type="entry name" value="RIBONUCLEASE H2 SUBUNIT A"/>
    <property type="match status" value="1"/>
</dbReference>
<dbReference type="PANTHER" id="PTHR10954:SF18">
    <property type="entry name" value="RIBONUCLEASE HII"/>
    <property type="match status" value="1"/>
</dbReference>
<dbReference type="Pfam" id="PF01351">
    <property type="entry name" value="RNase_HII"/>
    <property type="match status" value="1"/>
</dbReference>
<dbReference type="SUPFAM" id="SSF53098">
    <property type="entry name" value="Ribonuclease H-like"/>
    <property type="match status" value="1"/>
</dbReference>
<dbReference type="PROSITE" id="PS51975">
    <property type="entry name" value="RNASE_H_2"/>
    <property type="match status" value="1"/>
</dbReference>
<organism>
    <name type="scientific">Streptococcus mutans serotype c (strain ATCC 700610 / UA159)</name>
    <dbReference type="NCBI Taxonomy" id="210007"/>
    <lineage>
        <taxon>Bacteria</taxon>
        <taxon>Bacillati</taxon>
        <taxon>Bacillota</taxon>
        <taxon>Bacilli</taxon>
        <taxon>Lactobacillales</taxon>
        <taxon>Streptococcaceae</taxon>
        <taxon>Streptococcus</taxon>
    </lineage>
</organism>
<name>RNH2_STRMU</name>
<gene>
    <name evidence="1" type="primary">rnhB</name>
    <name type="synonym">rnh</name>
    <name type="ordered locus">SMU_994</name>
</gene>
<evidence type="ECO:0000255" key="1">
    <source>
        <dbReference type="HAMAP-Rule" id="MF_00052"/>
    </source>
</evidence>
<evidence type="ECO:0000255" key="2">
    <source>
        <dbReference type="PROSITE-ProRule" id="PRU01319"/>
    </source>
</evidence>
<comment type="function">
    <text evidence="1">Endonuclease that specifically degrades the RNA of RNA-DNA hybrids.</text>
</comment>
<comment type="catalytic activity">
    <reaction evidence="1">
        <text>Endonucleolytic cleavage to 5'-phosphomonoester.</text>
        <dbReference type="EC" id="3.1.26.4"/>
    </reaction>
</comment>
<comment type="cofactor">
    <cofactor evidence="1">
        <name>Mn(2+)</name>
        <dbReference type="ChEBI" id="CHEBI:29035"/>
    </cofactor>
    <cofactor evidence="1">
        <name>Mg(2+)</name>
        <dbReference type="ChEBI" id="CHEBI:18420"/>
    </cofactor>
    <text evidence="1">Manganese or magnesium. Binds 1 divalent metal ion per monomer in the absence of substrate. May bind a second metal ion after substrate binding.</text>
</comment>
<comment type="subcellular location">
    <subcellularLocation>
        <location evidence="1">Cytoplasm</location>
    </subcellularLocation>
</comment>
<comment type="similarity">
    <text evidence="1">Belongs to the RNase HII family.</text>
</comment>
<accession>Q8DUE1</accession>
<proteinExistence type="inferred from homology"/>